<proteinExistence type="inferred from homology"/>
<comment type="catalytic activity">
    <reaction evidence="1">
        <text>D-mannitol 1-phosphate + NAD(+) = beta-D-fructose 6-phosphate + NADH + H(+)</text>
        <dbReference type="Rhea" id="RHEA:19661"/>
        <dbReference type="ChEBI" id="CHEBI:15378"/>
        <dbReference type="ChEBI" id="CHEBI:57540"/>
        <dbReference type="ChEBI" id="CHEBI:57634"/>
        <dbReference type="ChEBI" id="CHEBI:57945"/>
        <dbReference type="ChEBI" id="CHEBI:61381"/>
        <dbReference type="EC" id="1.1.1.17"/>
    </reaction>
</comment>
<comment type="similarity">
    <text evidence="1">Belongs to the mannitol dehydrogenase family.</text>
</comment>
<evidence type="ECO:0000255" key="1">
    <source>
        <dbReference type="HAMAP-Rule" id="MF_00196"/>
    </source>
</evidence>
<gene>
    <name evidence="1" type="primary">mtlD</name>
    <name type="ordered locus">SSP0725</name>
</gene>
<protein>
    <recommendedName>
        <fullName evidence="1">Mannitol-1-phosphate 5-dehydrogenase</fullName>
        <ecNumber evidence="1">1.1.1.17</ecNumber>
    </recommendedName>
</protein>
<feature type="chain" id="PRO_1000011817" description="Mannitol-1-phosphate 5-dehydrogenase">
    <location>
        <begin position="1"/>
        <end position="367"/>
    </location>
</feature>
<feature type="binding site" evidence="1">
    <location>
        <begin position="3"/>
        <end position="14"/>
    </location>
    <ligand>
        <name>NAD(+)</name>
        <dbReference type="ChEBI" id="CHEBI:57540"/>
    </ligand>
</feature>
<organism>
    <name type="scientific">Staphylococcus saprophyticus subsp. saprophyticus (strain ATCC 15305 / DSM 20229 / NCIMB 8711 / NCTC 7292 / S-41)</name>
    <dbReference type="NCBI Taxonomy" id="342451"/>
    <lineage>
        <taxon>Bacteria</taxon>
        <taxon>Bacillati</taxon>
        <taxon>Bacillota</taxon>
        <taxon>Bacilli</taxon>
        <taxon>Bacillales</taxon>
        <taxon>Staphylococcaceae</taxon>
        <taxon>Staphylococcus</taxon>
    </lineage>
</organism>
<dbReference type="EC" id="1.1.1.17" evidence="1"/>
<dbReference type="EMBL" id="AP008934">
    <property type="protein sequence ID" value="BAE17870.1"/>
    <property type="molecule type" value="Genomic_DNA"/>
</dbReference>
<dbReference type="RefSeq" id="WP_011302636.1">
    <property type="nucleotide sequence ID" value="NZ_MTGA01000032.1"/>
</dbReference>
<dbReference type="SMR" id="Q49ZA6"/>
<dbReference type="GeneID" id="3615926"/>
<dbReference type="KEGG" id="ssp:SSP0725"/>
<dbReference type="eggNOG" id="COG0246">
    <property type="taxonomic scope" value="Bacteria"/>
</dbReference>
<dbReference type="HOGENOM" id="CLU_036089_2_0_9"/>
<dbReference type="OrthoDB" id="271711at2"/>
<dbReference type="Proteomes" id="UP000006371">
    <property type="component" value="Chromosome"/>
</dbReference>
<dbReference type="GO" id="GO:0005829">
    <property type="term" value="C:cytosol"/>
    <property type="evidence" value="ECO:0007669"/>
    <property type="project" value="TreeGrafter"/>
</dbReference>
<dbReference type="GO" id="GO:0008926">
    <property type="term" value="F:mannitol-1-phosphate 5-dehydrogenase activity"/>
    <property type="evidence" value="ECO:0007669"/>
    <property type="project" value="UniProtKB-UniRule"/>
</dbReference>
<dbReference type="GO" id="GO:0019592">
    <property type="term" value="P:mannitol catabolic process"/>
    <property type="evidence" value="ECO:0007669"/>
    <property type="project" value="TreeGrafter"/>
</dbReference>
<dbReference type="Gene3D" id="1.10.1040.10">
    <property type="entry name" value="N-(1-d-carboxylethyl)-l-norvaline Dehydrogenase, domain 2"/>
    <property type="match status" value="1"/>
</dbReference>
<dbReference type="Gene3D" id="3.40.50.720">
    <property type="entry name" value="NAD(P)-binding Rossmann-like Domain"/>
    <property type="match status" value="1"/>
</dbReference>
<dbReference type="HAMAP" id="MF_00196">
    <property type="entry name" value="Mannitol_dehydrog"/>
    <property type="match status" value="1"/>
</dbReference>
<dbReference type="InterPro" id="IPR008927">
    <property type="entry name" value="6-PGluconate_DH-like_C_sf"/>
</dbReference>
<dbReference type="InterPro" id="IPR013328">
    <property type="entry name" value="6PGD_dom2"/>
</dbReference>
<dbReference type="InterPro" id="IPR023028">
    <property type="entry name" value="Mannitol_1_phos_5_DH"/>
</dbReference>
<dbReference type="InterPro" id="IPR000669">
    <property type="entry name" value="Mannitol_DH"/>
</dbReference>
<dbReference type="InterPro" id="IPR013118">
    <property type="entry name" value="Mannitol_DH_C"/>
</dbReference>
<dbReference type="InterPro" id="IPR023027">
    <property type="entry name" value="Mannitol_DH_CS"/>
</dbReference>
<dbReference type="InterPro" id="IPR013131">
    <property type="entry name" value="Mannitol_DH_N"/>
</dbReference>
<dbReference type="InterPro" id="IPR036291">
    <property type="entry name" value="NAD(P)-bd_dom_sf"/>
</dbReference>
<dbReference type="NCBIfam" id="NF002645">
    <property type="entry name" value="PRK02318.1-1"/>
    <property type="match status" value="1"/>
</dbReference>
<dbReference type="NCBIfam" id="NF002652">
    <property type="entry name" value="PRK02318.2-5"/>
    <property type="match status" value="1"/>
</dbReference>
<dbReference type="PANTHER" id="PTHR30524:SF0">
    <property type="entry name" value="ALTRONATE OXIDOREDUCTASE-RELATED"/>
    <property type="match status" value="1"/>
</dbReference>
<dbReference type="PANTHER" id="PTHR30524">
    <property type="entry name" value="MANNITOL-1-PHOSPHATE 5-DEHYDROGENASE"/>
    <property type="match status" value="1"/>
</dbReference>
<dbReference type="Pfam" id="PF01232">
    <property type="entry name" value="Mannitol_dh"/>
    <property type="match status" value="1"/>
</dbReference>
<dbReference type="Pfam" id="PF08125">
    <property type="entry name" value="Mannitol_dh_C"/>
    <property type="match status" value="1"/>
</dbReference>
<dbReference type="PRINTS" id="PR00084">
    <property type="entry name" value="MTLDHDRGNASE"/>
</dbReference>
<dbReference type="SUPFAM" id="SSF48179">
    <property type="entry name" value="6-phosphogluconate dehydrogenase C-terminal domain-like"/>
    <property type="match status" value="1"/>
</dbReference>
<dbReference type="SUPFAM" id="SSF51735">
    <property type="entry name" value="NAD(P)-binding Rossmann-fold domains"/>
    <property type="match status" value="1"/>
</dbReference>
<dbReference type="PROSITE" id="PS00974">
    <property type="entry name" value="MANNITOL_DHGENASE"/>
    <property type="match status" value="1"/>
</dbReference>
<name>MTLD_STAS1</name>
<keyword id="KW-0520">NAD</keyword>
<keyword id="KW-0560">Oxidoreductase</keyword>
<keyword id="KW-1185">Reference proteome</keyword>
<reference key="1">
    <citation type="journal article" date="2005" name="Proc. Natl. Acad. Sci. U.S.A.">
        <title>Whole genome sequence of Staphylococcus saprophyticus reveals the pathogenesis of uncomplicated urinary tract infection.</title>
        <authorList>
            <person name="Kuroda M."/>
            <person name="Yamashita A."/>
            <person name="Hirakawa H."/>
            <person name="Kumano M."/>
            <person name="Morikawa K."/>
            <person name="Higashide M."/>
            <person name="Maruyama A."/>
            <person name="Inose Y."/>
            <person name="Matoba K."/>
            <person name="Toh H."/>
            <person name="Kuhara S."/>
            <person name="Hattori M."/>
            <person name="Ohta T."/>
        </authorList>
    </citation>
    <scope>NUCLEOTIDE SEQUENCE [LARGE SCALE GENOMIC DNA]</scope>
    <source>
        <strain>ATCC 15305 / DSM 20229 / NCIMB 8711 / NCTC 7292 / S-41</strain>
    </source>
</reference>
<accession>Q49ZA6</accession>
<sequence length="367" mass="41143">MKALHFGAGNIGRGFIGYILADNDVKVTFADVNEEIINALDKEHQYDVILADEAKTTTRVHNVDAINSGGPSESLKQAVLEADLITTAVGVNILPIIAKSFAPYLKEKETPVNIVACENAIMATNTLKDAILDITGPLGDHIHFANSAVDRIVPLQTNDNLLDVIVEPFYEWVIEKDAWFGPELDHIKYVDNLTPYIERKLLTVNTGHAYLAYAGRFYGQPTILDAVNDDNIRHGLENVLKETSQYITTQFNFTESEQAQYVDKIIGRFKNPNLSDEVTRVGRGTMRKIGPQDRIIKPLSYLYQNNLKHDALIKTAALLLKYDDTNDQETVEKNEYIDKHGVEGFLKSFAKTDDQLTSEIVKEYNVL</sequence>